<name>LPOB_ENT38</name>
<gene>
    <name evidence="1" type="primary">lpoB</name>
    <name type="ordered locus">Ent638_1620</name>
</gene>
<dbReference type="EMBL" id="CP000653">
    <property type="protein sequence ID" value="ABP60299.1"/>
    <property type="molecule type" value="Genomic_DNA"/>
</dbReference>
<dbReference type="SMR" id="A4W9B9"/>
<dbReference type="STRING" id="399742.Ent638_1620"/>
<dbReference type="KEGG" id="ent:Ent638_1620"/>
<dbReference type="eggNOG" id="COG3417">
    <property type="taxonomic scope" value="Bacteria"/>
</dbReference>
<dbReference type="HOGENOM" id="CLU_092328_0_0_6"/>
<dbReference type="Proteomes" id="UP000000230">
    <property type="component" value="Chromosome"/>
</dbReference>
<dbReference type="GO" id="GO:0031241">
    <property type="term" value="C:periplasmic side of cell outer membrane"/>
    <property type="evidence" value="ECO:0007669"/>
    <property type="project" value="UniProtKB-UniRule"/>
</dbReference>
<dbReference type="GO" id="GO:0030234">
    <property type="term" value="F:enzyme regulator activity"/>
    <property type="evidence" value="ECO:0007669"/>
    <property type="project" value="UniProtKB-UniRule"/>
</dbReference>
<dbReference type="GO" id="GO:0009252">
    <property type="term" value="P:peptidoglycan biosynthetic process"/>
    <property type="evidence" value="ECO:0007669"/>
    <property type="project" value="UniProtKB-UniRule"/>
</dbReference>
<dbReference type="GO" id="GO:0008360">
    <property type="term" value="P:regulation of cell shape"/>
    <property type="evidence" value="ECO:0007669"/>
    <property type="project" value="UniProtKB-KW"/>
</dbReference>
<dbReference type="FunFam" id="3.40.50.10610:FF:000002">
    <property type="entry name" value="Penicillin-binding protein activator LpoB"/>
    <property type="match status" value="1"/>
</dbReference>
<dbReference type="Gene3D" id="3.40.50.10610">
    <property type="entry name" value="ABC-type transport auxiliary lipoprotein component"/>
    <property type="match status" value="1"/>
</dbReference>
<dbReference type="HAMAP" id="MF_01889">
    <property type="entry name" value="LpoB"/>
    <property type="match status" value="1"/>
</dbReference>
<dbReference type="InterPro" id="IPR014094">
    <property type="entry name" value="LpoB"/>
</dbReference>
<dbReference type="NCBIfam" id="TIGR02722">
    <property type="entry name" value="lp"/>
    <property type="match status" value="1"/>
</dbReference>
<dbReference type="PANTHER" id="PTHR40593">
    <property type="entry name" value="PENICILLIN-BINDING PROTEIN ACTIVATOR LPOB"/>
    <property type="match status" value="1"/>
</dbReference>
<dbReference type="PANTHER" id="PTHR40593:SF1">
    <property type="entry name" value="PENICILLIN-BINDING PROTEIN ACTIVATOR LPOB"/>
    <property type="match status" value="1"/>
</dbReference>
<dbReference type="Pfam" id="PF13036">
    <property type="entry name" value="LpoB"/>
    <property type="match status" value="1"/>
</dbReference>
<dbReference type="PROSITE" id="PS51257">
    <property type="entry name" value="PROKAR_LIPOPROTEIN"/>
    <property type="match status" value="1"/>
</dbReference>
<comment type="function">
    <text evidence="1">Regulator of peptidoglycan synthesis that is essential for the function of penicillin-binding protein 1B (PBP1b).</text>
</comment>
<comment type="subunit">
    <text evidence="1">Interacts with PBP1b.</text>
</comment>
<comment type="subcellular location">
    <subcellularLocation>
        <location evidence="1">Cell outer membrane</location>
        <topology evidence="1">Lipid-anchor</topology>
        <orientation evidence="1">Periplasmic side</orientation>
    </subcellularLocation>
</comment>
<comment type="similarity">
    <text evidence="1">Belongs to the LpoB family.</text>
</comment>
<evidence type="ECO:0000255" key="1">
    <source>
        <dbReference type="HAMAP-Rule" id="MF_01889"/>
    </source>
</evidence>
<evidence type="ECO:0000256" key="2">
    <source>
        <dbReference type="SAM" id="MobiDB-lite"/>
    </source>
</evidence>
<organism>
    <name type="scientific">Enterobacter sp. (strain 638)</name>
    <dbReference type="NCBI Taxonomy" id="399742"/>
    <lineage>
        <taxon>Bacteria</taxon>
        <taxon>Pseudomonadati</taxon>
        <taxon>Pseudomonadota</taxon>
        <taxon>Gammaproteobacteria</taxon>
        <taxon>Enterobacterales</taxon>
        <taxon>Enterobacteriaceae</taxon>
        <taxon>Enterobacter</taxon>
    </lineage>
</organism>
<sequence length="216" mass="22840">MIKNLSRYALVTAFALFLSGCITRTEQQPAPVDEAKPGTEQPAQPTQPVPTVPSVPTVPAQPGPIEHPDQTSQPAPRVRHYDWNGAMQPMVGKMLQAQGVTAGSVLLVDSVNNRTNGTLNAGEATETLRNALANNGKFTLVSAQQLAVAKQQLGLSPQDSLGSRSKAMGIARNVGAQYVLYSNATGNVNTPALQMQLMLVQTGEIIWSGKGAVSQQ</sequence>
<proteinExistence type="inferred from homology"/>
<accession>A4W9B9</accession>
<protein>
    <recommendedName>
        <fullName evidence="1">Penicillin-binding protein activator LpoB</fullName>
        <shortName evidence="1">PBP activator LpoB</shortName>
    </recommendedName>
</protein>
<keyword id="KW-0998">Cell outer membrane</keyword>
<keyword id="KW-0133">Cell shape</keyword>
<keyword id="KW-0449">Lipoprotein</keyword>
<keyword id="KW-0472">Membrane</keyword>
<keyword id="KW-0564">Palmitate</keyword>
<keyword id="KW-0573">Peptidoglycan synthesis</keyword>
<keyword id="KW-0732">Signal</keyword>
<reference key="1">
    <citation type="journal article" date="2010" name="PLoS Genet.">
        <title>Genome sequence of the plant growth promoting endophytic bacterium Enterobacter sp. 638.</title>
        <authorList>
            <person name="Taghavi S."/>
            <person name="van der Lelie D."/>
            <person name="Hoffman A."/>
            <person name="Zhang Y.B."/>
            <person name="Walla M.D."/>
            <person name="Vangronsveld J."/>
            <person name="Newman L."/>
            <person name="Monchy S."/>
        </authorList>
    </citation>
    <scope>NUCLEOTIDE SEQUENCE [LARGE SCALE GENOMIC DNA]</scope>
    <source>
        <strain>638</strain>
    </source>
</reference>
<feature type="signal peptide" evidence="1">
    <location>
        <begin position="1"/>
        <end position="20"/>
    </location>
</feature>
<feature type="chain" id="PRO_5000237839" description="Penicillin-binding protein activator LpoB">
    <location>
        <begin position="21"/>
        <end position="216"/>
    </location>
</feature>
<feature type="region of interest" description="Disordered" evidence="2">
    <location>
        <begin position="28"/>
        <end position="77"/>
    </location>
</feature>
<feature type="lipid moiety-binding region" description="N-palmitoyl cysteine" evidence="1">
    <location>
        <position position="21"/>
    </location>
</feature>
<feature type="lipid moiety-binding region" description="S-diacylglycerol cysteine" evidence="1">
    <location>
        <position position="21"/>
    </location>
</feature>